<name>RECA_GEOMG</name>
<accession>Q39Z80</accession>
<organism>
    <name type="scientific">Geobacter metallireducens (strain ATCC 53774 / DSM 7210 / GS-15)</name>
    <dbReference type="NCBI Taxonomy" id="269799"/>
    <lineage>
        <taxon>Bacteria</taxon>
        <taxon>Pseudomonadati</taxon>
        <taxon>Thermodesulfobacteriota</taxon>
        <taxon>Desulfuromonadia</taxon>
        <taxon>Geobacterales</taxon>
        <taxon>Geobacteraceae</taxon>
        <taxon>Geobacter</taxon>
    </lineage>
</organism>
<feature type="chain" id="PRO_1000047925" description="Protein RecA">
    <location>
        <begin position="1"/>
        <end position="339"/>
    </location>
</feature>
<feature type="binding site" evidence="1">
    <location>
        <begin position="66"/>
        <end position="73"/>
    </location>
    <ligand>
        <name>ATP</name>
        <dbReference type="ChEBI" id="CHEBI:30616"/>
    </ligand>
</feature>
<protein>
    <recommendedName>
        <fullName evidence="1">Protein RecA</fullName>
    </recommendedName>
    <alternativeName>
        <fullName evidence="1">Recombinase A</fullName>
    </alternativeName>
</protein>
<gene>
    <name evidence="1" type="primary">recA</name>
    <name type="ordered locus">Gmet_0198</name>
</gene>
<reference key="1">
    <citation type="journal article" date="2009" name="BMC Microbiol.">
        <title>The genome sequence of Geobacter metallireducens: features of metabolism, physiology and regulation common and dissimilar to Geobacter sulfurreducens.</title>
        <authorList>
            <person name="Aklujkar M."/>
            <person name="Krushkal J."/>
            <person name="DiBartolo G."/>
            <person name="Lapidus A."/>
            <person name="Land M.L."/>
            <person name="Lovley D.R."/>
        </authorList>
    </citation>
    <scope>NUCLEOTIDE SEQUENCE [LARGE SCALE GENOMIC DNA]</scope>
    <source>
        <strain>ATCC 53774 / DSM 7210 / GS-15</strain>
    </source>
</reference>
<proteinExistence type="inferred from homology"/>
<evidence type="ECO:0000255" key="1">
    <source>
        <dbReference type="HAMAP-Rule" id="MF_00268"/>
    </source>
</evidence>
<sequence length="339" mass="36476">MTQEREKAIELALSQIEKQFGKGAIMRLGADEALPDIDAIPTGALSLDIALGVGGVPRGRVIEIYGPESSGKTTLALHIAAEAQKLGGIAAFVDAEHALDIGYARKLGVRTDDLLVSQPDTGEQALEIAEMLVRSGAVDVLVIDSVAALVPKAEIEGEMGDSHVGLQARLMSQALRKLTGIISKSNCCVIFINQIRMKIGVMFGSPETTTGGNALKFYASVRLDIRKIATLKQGDAVIGSRTKVKVVKNKVAPPFREVEFDIYYGEGISRLGDLLDLAVDRKIIDKSGAWFSYGSDRIGQGRENSRNFLKEHPEMVAEIEDKIYETAGIPRKGGKEEAA</sequence>
<comment type="function">
    <text evidence="1">Can catalyze the hydrolysis of ATP in the presence of single-stranded DNA, the ATP-dependent uptake of single-stranded DNA by duplex DNA, and the ATP-dependent hybridization of homologous single-stranded DNAs. It interacts with LexA causing its activation and leading to its autocatalytic cleavage.</text>
</comment>
<comment type="subcellular location">
    <subcellularLocation>
        <location evidence="1">Cytoplasm</location>
    </subcellularLocation>
</comment>
<comment type="similarity">
    <text evidence="1">Belongs to the RecA family.</text>
</comment>
<dbReference type="EMBL" id="CP000148">
    <property type="protein sequence ID" value="ABB30444.1"/>
    <property type="molecule type" value="Genomic_DNA"/>
</dbReference>
<dbReference type="RefSeq" id="WP_004512787.1">
    <property type="nucleotide sequence ID" value="NC_007517.1"/>
</dbReference>
<dbReference type="SMR" id="Q39Z80"/>
<dbReference type="STRING" id="269799.Gmet_0198"/>
<dbReference type="KEGG" id="gme:Gmet_0198"/>
<dbReference type="eggNOG" id="COG0468">
    <property type="taxonomic scope" value="Bacteria"/>
</dbReference>
<dbReference type="HOGENOM" id="CLU_040469_1_2_7"/>
<dbReference type="Proteomes" id="UP000007073">
    <property type="component" value="Chromosome"/>
</dbReference>
<dbReference type="GO" id="GO:0005829">
    <property type="term" value="C:cytosol"/>
    <property type="evidence" value="ECO:0007669"/>
    <property type="project" value="TreeGrafter"/>
</dbReference>
<dbReference type="GO" id="GO:0005524">
    <property type="term" value="F:ATP binding"/>
    <property type="evidence" value="ECO:0007669"/>
    <property type="project" value="UniProtKB-UniRule"/>
</dbReference>
<dbReference type="GO" id="GO:0016887">
    <property type="term" value="F:ATP hydrolysis activity"/>
    <property type="evidence" value="ECO:0007669"/>
    <property type="project" value="InterPro"/>
</dbReference>
<dbReference type="GO" id="GO:0140664">
    <property type="term" value="F:ATP-dependent DNA damage sensor activity"/>
    <property type="evidence" value="ECO:0007669"/>
    <property type="project" value="InterPro"/>
</dbReference>
<dbReference type="GO" id="GO:0003684">
    <property type="term" value="F:damaged DNA binding"/>
    <property type="evidence" value="ECO:0007669"/>
    <property type="project" value="UniProtKB-UniRule"/>
</dbReference>
<dbReference type="GO" id="GO:0003697">
    <property type="term" value="F:single-stranded DNA binding"/>
    <property type="evidence" value="ECO:0007669"/>
    <property type="project" value="UniProtKB-UniRule"/>
</dbReference>
<dbReference type="GO" id="GO:0006310">
    <property type="term" value="P:DNA recombination"/>
    <property type="evidence" value="ECO:0007669"/>
    <property type="project" value="UniProtKB-UniRule"/>
</dbReference>
<dbReference type="GO" id="GO:0006281">
    <property type="term" value="P:DNA repair"/>
    <property type="evidence" value="ECO:0007669"/>
    <property type="project" value="UniProtKB-UniRule"/>
</dbReference>
<dbReference type="GO" id="GO:0009432">
    <property type="term" value="P:SOS response"/>
    <property type="evidence" value="ECO:0007669"/>
    <property type="project" value="UniProtKB-UniRule"/>
</dbReference>
<dbReference type="CDD" id="cd00983">
    <property type="entry name" value="RecA"/>
    <property type="match status" value="1"/>
</dbReference>
<dbReference type="FunFam" id="3.40.50.300:FF:000087">
    <property type="entry name" value="Recombinase RecA"/>
    <property type="match status" value="1"/>
</dbReference>
<dbReference type="Gene3D" id="3.40.50.300">
    <property type="entry name" value="P-loop containing nucleotide triphosphate hydrolases"/>
    <property type="match status" value="1"/>
</dbReference>
<dbReference type="HAMAP" id="MF_00268">
    <property type="entry name" value="RecA"/>
    <property type="match status" value="1"/>
</dbReference>
<dbReference type="InterPro" id="IPR003593">
    <property type="entry name" value="AAA+_ATPase"/>
</dbReference>
<dbReference type="InterPro" id="IPR013765">
    <property type="entry name" value="DNA_recomb/repair_RecA"/>
</dbReference>
<dbReference type="InterPro" id="IPR020584">
    <property type="entry name" value="DNA_recomb/repair_RecA_CS"/>
</dbReference>
<dbReference type="InterPro" id="IPR027417">
    <property type="entry name" value="P-loop_NTPase"/>
</dbReference>
<dbReference type="InterPro" id="IPR049261">
    <property type="entry name" value="RecA-like_C"/>
</dbReference>
<dbReference type="InterPro" id="IPR049428">
    <property type="entry name" value="RecA-like_N"/>
</dbReference>
<dbReference type="InterPro" id="IPR020588">
    <property type="entry name" value="RecA_ATP-bd"/>
</dbReference>
<dbReference type="InterPro" id="IPR023400">
    <property type="entry name" value="RecA_C_sf"/>
</dbReference>
<dbReference type="InterPro" id="IPR020587">
    <property type="entry name" value="RecA_monomer-monomer_interface"/>
</dbReference>
<dbReference type="NCBIfam" id="TIGR02012">
    <property type="entry name" value="tigrfam_recA"/>
    <property type="match status" value="1"/>
</dbReference>
<dbReference type="PANTHER" id="PTHR45900:SF1">
    <property type="entry name" value="MITOCHONDRIAL DNA REPAIR PROTEIN RECA HOMOLOG-RELATED"/>
    <property type="match status" value="1"/>
</dbReference>
<dbReference type="PANTHER" id="PTHR45900">
    <property type="entry name" value="RECA"/>
    <property type="match status" value="1"/>
</dbReference>
<dbReference type="Pfam" id="PF00154">
    <property type="entry name" value="RecA"/>
    <property type="match status" value="1"/>
</dbReference>
<dbReference type="Pfam" id="PF21096">
    <property type="entry name" value="RecA_C"/>
    <property type="match status" value="1"/>
</dbReference>
<dbReference type="PRINTS" id="PR00142">
    <property type="entry name" value="RECA"/>
</dbReference>
<dbReference type="SMART" id="SM00382">
    <property type="entry name" value="AAA"/>
    <property type="match status" value="1"/>
</dbReference>
<dbReference type="SUPFAM" id="SSF52540">
    <property type="entry name" value="P-loop containing nucleoside triphosphate hydrolases"/>
    <property type="match status" value="1"/>
</dbReference>
<dbReference type="SUPFAM" id="SSF54752">
    <property type="entry name" value="RecA protein, C-terminal domain"/>
    <property type="match status" value="1"/>
</dbReference>
<dbReference type="PROSITE" id="PS00321">
    <property type="entry name" value="RECA_1"/>
    <property type="match status" value="1"/>
</dbReference>
<dbReference type="PROSITE" id="PS50162">
    <property type="entry name" value="RECA_2"/>
    <property type="match status" value="1"/>
</dbReference>
<dbReference type="PROSITE" id="PS50163">
    <property type="entry name" value="RECA_3"/>
    <property type="match status" value="1"/>
</dbReference>
<keyword id="KW-0067">ATP-binding</keyword>
<keyword id="KW-0963">Cytoplasm</keyword>
<keyword id="KW-0227">DNA damage</keyword>
<keyword id="KW-0233">DNA recombination</keyword>
<keyword id="KW-0234">DNA repair</keyword>
<keyword id="KW-0238">DNA-binding</keyword>
<keyword id="KW-0547">Nucleotide-binding</keyword>
<keyword id="KW-1185">Reference proteome</keyword>
<keyword id="KW-0742">SOS response</keyword>